<comment type="function">
    <text evidence="1">Probable zinc metalloprotease whose natural substrate is unknown.</text>
</comment>
<comment type="cofactor">
    <cofactor evidence="1">
        <name>Zn(2+)</name>
        <dbReference type="ChEBI" id="CHEBI:29105"/>
    </cofactor>
    <text evidence="1">Binds 2 Zn(2+) ions per subunit. One is catalytic, whereas the other seems to have a structural role.</text>
</comment>
<comment type="subunit">
    <text evidence="1">Monomer.</text>
</comment>
<comment type="similarity">
    <text evidence="1">Belongs to the peptidase M54 family.</text>
</comment>
<feature type="chain" id="PRO_0000159633" description="Archaemetzincin">
    <location>
        <begin position="1"/>
        <end position="188"/>
    </location>
</feature>
<feature type="active site" description="Proton acceptor" evidence="1">
    <location>
        <position position="138"/>
    </location>
</feature>
<feature type="binding site" evidence="1">
    <location>
        <position position="137"/>
    </location>
    <ligand>
        <name>Zn(2+)</name>
        <dbReference type="ChEBI" id="CHEBI:29105"/>
        <label>1</label>
        <note>catalytic</note>
    </ligand>
</feature>
<feature type="binding site" evidence="1">
    <location>
        <position position="141"/>
    </location>
    <ligand>
        <name>Zn(2+)</name>
        <dbReference type="ChEBI" id="CHEBI:29105"/>
        <label>1</label>
        <note>catalytic</note>
    </ligand>
</feature>
<feature type="binding site" evidence="1">
    <location>
        <position position="147"/>
    </location>
    <ligand>
        <name>Zn(2+)</name>
        <dbReference type="ChEBI" id="CHEBI:29105"/>
        <label>1</label>
        <note>catalytic</note>
    </ligand>
</feature>
<feature type="binding site" evidence="1">
    <location>
        <position position="148"/>
    </location>
    <ligand>
        <name>Zn(2+)</name>
        <dbReference type="ChEBI" id="CHEBI:29105"/>
        <label>2</label>
    </ligand>
</feature>
<feature type="binding site" evidence="1">
    <location>
        <position position="153"/>
    </location>
    <ligand>
        <name>Zn(2+)</name>
        <dbReference type="ChEBI" id="CHEBI:29105"/>
        <label>2</label>
    </ligand>
</feature>
<feature type="binding site" evidence="1">
    <location>
        <position position="172"/>
    </location>
    <ligand>
        <name>Zn(2+)</name>
        <dbReference type="ChEBI" id="CHEBI:29105"/>
        <label>2</label>
    </ligand>
</feature>
<feature type="binding site" evidence="1">
    <location>
        <position position="175"/>
    </location>
    <ligand>
        <name>Zn(2+)</name>
        <dbReference type="ChEBI" id="CHEBI:29105"/>
        <label>2</label>
    </ligand>
</feature>
<accession>O59484</accession>
<proteinExistence type="inferred from homology"/>
<gene>
    <name evidence="1" type="primary">amzA</name>
    <name type="ordered locus">PH1820</name>
</gene>
<organism>
    <name type="scientific">Pyrococcus horikoshii (strain ATCC 700860 / DSM 12428 / JCM 9974 / NBRC 100139 / OT-3)</name>
    <dbReference type="NCBI Taxonomy" id="70601"/>
    <lineage>
        <taxon>Archaea</taxon>
        <taxon>Methanobacteriati</taxon>
        <taxon>Methanobacteriota</taxon>
        <taxon>Thermococci</taxon>
        <taxon>Thermococcales</taxon>
        <taxon>Thermococcaceae</taxon>
        <taxon>Pyrococcus</taxon>
    </lineage>
</organism>
<evidence type="ECO:0000255" key="1">
    <source>
        <dbReference type="HAMAP-Rule" id="MF_01842"/>
    </source>
</evidence>
<dbReference type="EC" id="3.4.-.-" evidence="1"/>
<dbReference type="EMBL" id="BA000001">
    <property type="protein sequence ID" value="BAA30939.1"/>
    <property type="molecule type" value="Genomic_DNA"/>
</dbReference>
<dbReference type="PIR" id="D71193">
    <property type="entry name" value="D71193"/>
</dbReference>
<dbReference type="SMR" id="O59484"/>
<dbReference type="STRING" id="70601.gene:9378822"/>
<dbReference type="MEROPS" id="M54.001"/>
<dbReference type="EnsemblBacteria" id="BAA30939">
    <property type="protein sequence ID" value="BAA30939"/>
    <property type="gene ID" value="BAA30939"/>
</dbReference>
<dbReference type="KEGG" id="pho:PH1820"/>
<dbReference type="eggNOG" id="arCOG00458">
    <property type="taxonomic scope" value="Archaea"/>
</dbReference>
<dbReference type="OrthoDB" id="50281at2157"/>
<dbReference type="Proteomes" id="UP000000752">
    <property type="component" value="Chromosome"/>
</dbReference>
<dbReference type="GO" id="GO:0008237">
    <property type="term" value="F:metallopeptidase activity"/>
    <property type="evidence" value="ECO:0007669"/>
    <property type="project" value="UniProtKB-UniRule"/>
</dbReference>
<dbReference type="GO" id="GO:0008270">
    <property type="term" value="F:zinc ion binding"/>
    <property type="evidence" value="ECO:0007669"/>
    <property type="project" value="UniProtKB-UniRule"/>
</dbReference>
<dbReference type="GO" id="GO:0006508">
    <property type="term" value="P:proteolysis"/>
    <property type="evidence" value="ECO:0007669"/>
    <property type="project" value="UniProtKB-UniRule"/>
</dbReference>
<dbReference type="CDD" id="cd11375">
    <property type="entry name" value="Peptidase_M54"/>
    <property type="match status" value="1"/>
</dbReference>
<dbReference type="Gene3D" id="3.40.390.10">
    <property type="entry name" value="Collagenase (Catalytic Domain)"/>
    <property type="match status" value="1"/>
</dbReference>
<dbReference type="HAMAP" id="MF_01842">
    <property type="entry name" value="Archaemetzincin"/>
    <property type="match status" value="1"/>
</dbReference>
<dbReference type="InterPro" id="IPR024079">
    <property type="entry name" value="MetalloPept_cat_dom_sf"/>
</dbReference>
<dbReference type="InterPro" id="IPR012962">
    <property type="entry name" value="Pept_M54_archaemetzincn"/>
</dbReference>
<dbReference type="InterPro" id="IPR012091">
    <property type="entry name" value="Pept_M54_archaemetzncn_arc/bac"/>
</dbReference>
<dbReference type="NCBIfam" id="NF033823">
    <property type="entry name" value="archmetzin"/>
    <property type="match status" value="1"/>
</dbReference>
<dbReference type="PANTHER" id="PTHR15910">
    <property type="entry name" value="ARCHAEMETZINCIN"/>
    <property type="match status" value="1"/>
</dbReference>
<dbReference type="PANTHER" id="PTHR15910:SF1">
    <property type="entry name" value="ARCHAEMETZINCIN-2"/>
    <property type="match status" value="1"/>
</dbReference>
<dbReference type="Pfam" id="PF07998">
    <property type="entry name" value="Peptidase_M54"/>
    <property type="match status" value="1"/>
</dbReference>
<dbReference type="PIRSF" id="PIRSF005785">
    <property type="entry name" value="Zn-prot_arch"/>
    <property type="match status" value="1"/>
</dbReference>
<dbReference type="SUPFAM" id="SSF55486">
    <property type="entry name" value="Metalloproteases ('zincins'), catalytic domain"/>
    <property type="match status" value="1"/>
</dbReference>
<reference key="1">
    <citation type="journal article" date="1998" name="DNA Res.">
        <title>Complete sequence and gene organization of the genome of a hyper-thermophilic archaebacterium, Pyrococcus horikoshii OT3.</title>
        <authorList>
            <person name="Kawarabayasi Y."/>
            <person name="Sawada M."/>
            <person name="Horikawa H."/>
            <person name="Haikawa Y."/>
            <person name="Hino Y."/>
            <person name="Yamamoto S."/>
            <person name="Sekine M."/>
            <person name="Baba S."/>
            <person name="Kosugi H."/>
            <person name="Hosoyama A."/>
            <person name="Nagai Y."/>
            <person name="Sakai M."/>
            <person name="Ogura K."/>
            <person name="Otsuka R."/>
            <person name="Nakazawa H."/>
            <person name="Takamiya M."/>
            <person name="Ohfuku Y."/>
            <person name="Funahashi T."/>
            <person name="Tanaka T."/>
            <person name="Kudoh Y."/>
            <person name="Yamazaki J."/>
            <person name="Kushida N."/>
            <person name="Oguchi A."/>
            <person name="Aoki K."/>
            <person name="Yoshizawa T."/>
            <person name="Nakamura Y."/>
            <person name="Robb F.T."/>
            <person name="Horikoshi K."/>
            <person name="Masuchi Y."/>
            <person name="Shizuya H."/>
            <person name="Kikuchi H."/>
        </authorList>
    </citation>
    <scope>NUCLEOTIDE SEQUENCE [LARGE SCALE GENOMIC DNA]</scope>
    <source>
        <strain>ATCC 700860 / DSM 12428 / JCM 9974 / NBRC 100139 / OT-3</strain>
    </source>
</reference>
<name>AMZA_PYRHO</name>
<keyword id="KW-0378">Hydrolase</keyword>
<keyword id="KW-0479">Metal-binding</keyword>
<keyword id="KW-0482">Metalloprotease</keyword>
<keyword id="KW-0645">Protease</keyword>
<keyword id="KW-0862">Zinc</keyword>
<sequence>MMGNDSYSSNRGSSRDVLSFLQNFLGGFYAKYGIEVKLVGGLSLSKFYYAFDAERNQFLARHFLPVLSYIKKDFNARAALGIVNVDIYEPGFNFIFGLAHPGLKVAVVSLYRLYPEFYGNPPDRKLLKERALKEVMHELGHVFGLGHCPNPKCVMHFSNSIIDTDIKSWMYCESCLRKLEKNLARSHV</sequence>
<protein>
    <recommendedName>
        <fullName evidence="1">Archaemetzincin</fullName>
        <ecNumber evidence="1">3.4.-.-</ecNumber>
    </recommendedName>
</protein>